<gene>
    <name evidence="1" type="primary">fbpC</name>
</gene>
<name>FBPC_NEIGO</name>
<comment type="function">
    <text evidence="1">Part of the ABC transporter complex FbpABC involved in Fe(3+) ions import. Responsible for energy coupling to the transport system.</text>
</comment>
<comment type="catalytic activity">
    <reaction evidence="1">
        <text>Fe(3+)(out) + ATP + H2O = Fe(3+)(in) + ADP + phosphate + H(+)</text>
        <dbReference type="Rhea" id="RHEA:12332"/>
        <dbReference type="ChEBI" id="CHEBI:15377"/>
        <dbReference type="ChEBI" id="CHEBI:15378"/>
        <dbReference type="ChEBI" id="CHEBI:29034"/>
        <dbReference type="ChEBI" id="CHEBI:30616"/>
        <dbReference type="ChEBI" id="CHEBI:43474"/>
        <dbReference type="ChEBI" id="CHEBI:456216"/>
        <dbReference type="EC" id="7.2.2.7"/>
    </reaction>
</comment>
<comment type="subunit">
    <text evidence="1">The complex is composed of two ATP-binding proteins (FbpC), two transmembrane proteins (FbpB) and a solute-binding protein (FbpA).</text>
</comment>
<comment type="subcellular location">
    <subcellularLocation>
        <location evidence="1">Cell inner membrane</location>
        <topology evidence="1">Peripheral membrane protein</topology>
    </subcellularLocation>
</comment>
<comment type="similarity">
    <text evidence="1">Belongs to the ABC transporter superfamily. Fe(3+) ion importer (TC 3.A.1.10) family.</text>
</comment>
<sequence length="352" mass="37857">MTAALHIGHLSKSFQNTPVLNDISLSLDPGEILFIIGASGCGKTTLLRCLAGFEQPDSGEISLSGKTIFSKNTNLPVRETTFGLPRTGRCSVPHLTVYRNIAYGLGNGKGRTAQERQRIEAMLELTGISELAGRYPHELSGGQQQRVALARALAPDPELILLDEPFSALDEQLRRQIREDMIAALRANGKSAVFVSHDREEALQYADRIAVMKQGRILQTASPHELYRQPADLDAVLFIGEGIVFPAALNADGTADCRLGRLPVQSGAPAGTRGTLLIRPEQFSLHPHSAPVVSIHAVVLKTTPKARYTEISLRAGQTVLTLNLPSAPTLSDGISAVLHLDGPALFFPGNTL</sequence>
<evidence type="ECO:0000255" key="1">
    <source>
        <dbReference type="HAMAP-Rule" id="MF_01706"/>
    </source>
</evidence>
<keyword id="KW-0067">ATP-binding</keyword>
<keyword id="KW-0997">Cell inner membrane</keyword>
<keyword id="KW-1003">Cell membrane</keyword>
<keyword id="KW-0406">Ion transport</keyword>
<keyword id="KW-0408">Iron</keyword>
<keyword id="KW-0410">Iron transport</keyword>
<keyword id="KW-0472">Membrane</keyword>
<keyword id="KW-0547">Nucleotide-binding</keyword>
<keyword id="KW-1278">Translocase</keyword>
<keyword id="KW-0813">Transport</keyword>
<reference key="1">
    <citation type="journal article" date="1990" name="J. Exp. Med.">
        <title>Molecular cloning and characterization of the structural gene for the major iron-regulated protein expressed by Neisseria gonorrhoeae.</title>
        <authorList>
            <person name="Berish S.A."/>
            <person name="Mietzner T.A."/>
            <person name="Mayer L.W."/>
            <person name="Genco C.A."/>
            <person name="Holloway B.P."/>
            <person name="Morse S.A."/>
        </authorList>
    </citation>
    <scope>NUCLEOTIDE SEQUENCE [GENOMIC DNA]</scope>
    <source>
        <strain>ATCC 33084 / F62 / M-1914</strain>
    </source>
</reference>
<accession>Q50966</accession>
<dbReference type="EC" id="7.2.2.7" evidence="1"/>
<dbReference type="EMBL" id="U33937">
    <property type="protein sequence ID" value="AAB63561.1"/>
    <property type="molecule type" value="Genomic_DNA"/>
</dbReference>
<dbReference type="SMR" id="Q50966"/>
<dbReference type="DIP" id="DIP-48300N"/>
<dbReference type="GO" id="GO:0005886">
    <property type="term" value="C:plasma membrane"/>
    <property type="evidence" value="ECO:0007669"/>
    <property type="project" value="UniProtKB-SubCell"/>
</dbReference>
<dbReference type="GO" id="GO:0015408">
    <property type="term" value="F:ABC-type ferric iron transporter activity"/>
    <property type="evidence" value="ECO:0007669"/>
    <property type="project" value="UniProtKB-EC"/>
</dbReference>
<dbReference type="GO" id="GO:0005524">
    <property type="term" value="F:ATP binding"/>
    <property type="evidence" value="ECO:0007669"/>
    <property type="project" value="UniProtKB-KW"/>
</dbReference>
<dbReference type="GO" id="GO:0016887">
    <property type="term" value="F:ATP hydrolysis activity"/>
    <property type="evidence" value="ECO:0007669"/>
    <property type="project" value="InterPro"/>
</dbReference>
<dbReference type="CDD" id="cd03259">
    <property type="entry name" value="ABC_Carb_Solutes_like"/>
    <property type="match status" value="1"/>
</dbReference>
<dbReference type="FunFam" id="3.40.50.300:FF:000425">
    <property type="entry name" value="Probable ABC transporter, ATP-binding subunit"/>
    <property type="match status" value="1"/>
</dbReference>
<dbReference type="Gene3D" id="2.40.50.450">
    <property type="match status" value="1"/>
</dbReference>
<dbReference type="Gene3D" id="2.40.50.470">
    <property type="match status" value="1"/>
</dbReference>
<dbReference type="Gene3D" id="3.40.50.300">
    <property type="entry name" value="P-loop containing nucleotide triphosphate hydrolases"/>
    <property type="match status" value="1"/>
</dbReference>
<dbReference type="InterPro" id="IPR003593">
    <property type="entry name" value="AAA+_ATPase"/>
</dbReference>
<dbReference type="InterPro" id="IPR050093">
    <property type="entry name" value="ABC_SmlMolc_Importer"/>
</dbReference>
<dbReference type="InterPro" id="IPR003439">
    <property type="entry name" value="ABC_transporter-like_ATP-bd"/>
</dbReference>
<dbReference type="InterPro" id="IPR017871">
    <property type="entry name" value="ABC_transporter-like_CS"/>
</dbReference>
<dbReference type="InterPro" id="IPR015853">
    <property type="entry name" value="ABC_transpr_FbpC"/>
</dbReference>
<dbReference type="InterPro" id="IPR041230">
    <property type="entry name" value="FbpC_C"/>
</dbReference>
<dbReference type="InterPro" id="IPR055223">
    <property type="entry name" value="FbpC_RD"/>
</dbReference>
<dbReference type="InterPro" id="IPR027417">
    <property type="entry name" value="P-loop_NTPase"/>
</dbReference>
<dbReference type="PANTHER" id="PTHR42781:SF5">
    <property type="entry name" value="PUTRESCINE TRANSPORT ATP-BINDING PROTEIN POTG"/>
    <property type="match status" value="1"/>
</dbReference>
<dbReference type="PANTHER" id="PTHR42781">
    <property type="entry name" value="SPERMIDINE/PUTRESCINE IMPORT ATP-BINDING PROTEIN POTA"/>
    <property type="match status" value="1"/>
</dbReference>
<dbReference type="Pfam" id="PF00005">
    <property type="entry name" value="ABC_tran"/>
    <property type="match status" value="1"/>
</dbReference>
<dbReference type="Pfam" id="PF22443">
    <property type="entry name" value="FbpC-like_RD"/>
    <property type="match status" value="1"/>
</dbReference>
<dbReference type="Pfam" id="PF17845">
    <property type="entry name" value="FbpC_C_terminal"/>
    <property type="match status" value="1"/>
</dbReference>
<dbReference type="SMART" id="SM00382">
    <property type="entry name" value="AAA"/>
    <property type="match status" value="1"/>
</dbReference>
<dbReference type="SUPFAM" id="SSF52540">
    <property type="entry name" value="P-loop containing nucleoside triphosphate hydrolases"/>
    <property type="match status" value="1"/>
</dbReference>
<dbReference type="PROSITE" id="PS00211">
    <property type="entry name" value="ABC_TRANSPORTER_1"/>
    <property type="match status" value="1"/>
</dbReference>
<dbReference type="PROSITE" id="PS50893">
    <property type="entry name" value="ABC_TRANSPORTER_2"/>
    <property type="match status" value="1"/>
</dbReference>
<dbReference type="PROSITE" id="PS51242">
    <property type="entry name" value="FBPC"/>
    <property type="match status" value="1"/>
</dbReference>
<organism>
    <name type="scientific">Neisseria gonorrhoeae</name>
    <dbReference type="NCBI Taxonomy" id="485"/>
    <lineage>
        <taxon>Bacteria</taxon>
        <taxon>Pseudomonadati</taxon>
        <taxon>Pseudomonadota</taxon>
        <taxon>Betaproteobacteria</taxon>
        <taxon>Neisseriales</taxon>
        <taxon>Neisseriaceae</taxon>
        <taxon>Neisseria</taxon>
    </lineage>
</organism>
<feature type="chain" id="PRO_0000092355" description="Fe(3+) ions import ATP-binding protein FbpC">
    <location>
        <begin position="1"/>
        <end position="352"/>
    </location>
</feature>
<feature type="domain" description="ABC transporter" evidence="1">
    <location>
        <begin position="5"/>
        <end position="239"/>
    </location>
</feature>
<feature type="binding site" evidence="1">
    <location>
        <begin position="37"/>
        <end position="44"/>
    </location>
    <ligand>
        <name>ATP</name>
        <dbReference type="ChEBI" id="CHEBI:30616"/>
    </ligand>
</feature>
<protein>
    <recommendedName>
        <fullName evidence="1">Fe(3+) ions import ATP-binding protein FbpC</fullName>
        <ecNumber evidence="1">7.2.2.7</ecNumber>
    </recommendedName>
</protein>
<proteinExistence type="inferred from homology"/>